<accession>P84596</accession>
<keyword id="KW-0027">Amidation</keyword>
<keyword id="KW-0878">Amphibian defense peptide</keyword>
<keyword id="KW-0044">Antibiotic</keyword>
<keyword id="KW-0929">Antimicrobial</keyword>
<keyword id="KW-0165">Cleavage on pair of basic residues</keyword>
<keyword id="KW-0903">Direct protein sequencing</keyword>
<keyword id="KW-0964">Secreted</keyword>
<keyword id="KW-0732">Signal</keyword>
<reference key="1">
    <citation type="journal article" date="2006" name="Biochem. Biophys. Res. Commun.">
        <title>Novel dermaseptins from Phyllomedusa hypochondrialis (Amphibia).</title>
        <authorList>
            <person name="Brand G.D."/>
            <person name="Leite J.R.S.A."/>
            <person name="de Sa Mandel S.M."/>
            <person name="Mesquita D.A."/>
            <person name="Silva L.P."/>
            <person name="Prates M.V."/>
            <person name="Barbosa E.A."/>
            <person name="Vinecky F."/>
            <person name="Martins G.R."/>
            <person name="Galasso J.H."/>
            <person name="Kuckelhaus S.A.S."/>
            <person name="Sampaio R.N.R."/>
            <person name="Furtado J.R. Jr."/>
            <person name="Andrade A.C."/>
            <person name="Bloch C. Jr."/>
        </authorList>
    </citation>
    <scope>NUCLEOTIDE SEQUENCE [MRNA]</scope>
    <scope>PROTEIN SEQUENCE OF 46-70</scope>
    <scope>FUNCTION</scope>
    <scope>SUBCELLULAR LOCATION</scope>
    <scope>TISSUE SPECIFICITY</scope>
    <scope>MASS SPECTROMETRY</scope>
    <scope>AMIDATION AT LEU-70</scope>
    <source>
        <tissue>Skin</tissue>
        <tissue>Skin secretion</tissue>
    </source>
</reference>
<reference key="2">
    <citation type="journal article" date="2006" name="Peptides">
        <title>Isolation and biochemical characterization of peptides presenting antimicrobial activity from the skin of Phyllomedusa hypochondrialis.</title>
        <authorList>
            <person name="Conceicao K."/>
            <person name="Konno K."/>
            <person name="Richardson M."/>
            <person name="Antoniazzi M.M."/>
            <person name="Jared C."/>
            <person name="Daffre S."/>
            <person name="de Camargo A.C.M."/>
            <person name="Pimenta D.C."/>
        </authorList>
    </citation>
    <scope>PROTEIN SEQUENCE OF 46-70</scope>
    <scope>FUNCTION</scope>
    <scope>SUBCELLULAR LOCATION</scope>
    <scope>TISSUE SPECIFICITY</scope>
    <scope>MASS SPECTROMETRY</scope>
    <scope>AMIDATION AT LEU-70</scope>
    <source>
        <tissue>Skin secretion</tissue>
    </source>
</reference>
<reference key="3">
    <citation type="journal article" date="2008" name="Peptides">
        <title>A consistent nomenclature of antimicrobial peptides isolated from frogs of the subfamily Phyllomedusinae.</title>
        <authorList>
            <person name="Amiche M."/>
            <person name="Ladram A."/>
            <person name="Nicolas P."/>
        </authorList>
    </citation>
    <scope>NOMENCLATURE</scope>
</reference>
<sequence length="70" mass="7761">MAFLKKSLFLVLFLGMVSLSICEEEKRENEDEELQEDDEQSEMKRGLWSTIKNVGKEAAIAAGKAALGAL</sequence>
<protein>
    <recommendedName>
        <fullName evidence="7">Dermaseptin-H3</fullName>
        <shortName evidence="7">DRS-H3</shortName>
    </recommendedName>
    <alternativeName>
        <fullName evidence="5">DShypo 01</fullName>
    </alternativeName>
    <alternativeName>
        <fullName evidence="6">Dermaseptin DPh-1</fullName>
    </alternativeName>
</protein>
<organism>
    <name type="scientific">Pithecopus hypochondrialis</name>
    <name type="common">Orange-legged leaf frog</name>
    <name type="synonym">Phyllomedusa hypochondrialis</name>
    <dbReference type="NCBI Taxonomy" id="317381"/>
    <lineage>
        <taxon>Eukaryota</taxon>
        <taxon>Metazoa</taxon>
        <taxon>Chordata</taxon>
        <taxon>Craniata</taxon>
        <taxon>Vertebrata</taxon>
        <taxon>Euteleostomi</taxon>
        <taxon>Amphibia</taxon>
        <taxon>Batrachia</taxon>
        <taxon>Anura</taxon>
        <taxon>Neobatrachia</taxon>
        <taxon>Hyloidea</taxon>
        <taxon>Hylidae</taxon>
        <taxon>Phyllomedusinae</taxon>
        <taxon>Pithecopus</taxon>
    </lineage>
</organism>
<dbReference type="TCDB" id="1.C.52.1.20">
    <property type="family name" value="the dermaseptin (dermaseptin) family"/>
</dbReference>
<dbReference type="GO" id="GO:0005576">
    <property type="term" value="C:extracellular region"/>
    <property type="evidence" value="ECO:0007669"/>
    <property type="project" value="UniProtKB-SubCell"/>
</dbReference>
<dbReference type="GO" id="GO:0042742">
    <property type="term" value="P:defense response to bacterium"/>
    <property type="evidence" value="ECO:0007669"/>
    <property type="project" value="UniProtKB-KW"/>
</dbReference>
<dbReference type="InterPro" id="IPR022731">
    <property type="entry name" value="Dermaseptin_dom"/>
</dbReference>
<dbReference type="InterPro" id="IPR004275">
    <property type="entry name" value="Frog_antimicrobial_propeptide"/>
</dbReference>
<dbReference type="InterPro" id="IPR016322">
    <property type="entry name" value="FSAP"/>
</dbReference>
<dbReference type="Pfam" id="PF12121">
    <property type="entry name" value="DD_K"/>
    <property type="match status" value="1"/>
</dbReference>
<dbReference type="Pfam" id="PF03032">
    <property type="entry name" value="FSAP_sig_propep"/>
    <property type="match status" value="1"/>
</dbReference>
<dbReference type="PIRSF" id="PIRSF001822">
    <property type="entry name" value="Dermaseptin_precursor"/>
    <property type="match status" value="1"/>
</dbReference>
<feature type="signal peptide" evidence="1">
    <location>
        <begin position="1"/>
        <end position="22"/>
    </location>
</feature>
<feature type="propeptide" id="PRO_0000248492" evidence="3">
    <location>
        <begin position="23"/>
        <end position="43"/>
    </location>
</feature>
<feature type="peptide" id="PRO_0000248493" description="Dermaseptin-H3" evidence="3 4">
    <location>
        <begin position="46"/>
        <end position="70"/>
    </location>
</feature>
<feature type="region of interest" description="Disordered" evidence="2">
    <location>
        <begin position="25"/>
        <end position="44"/>
    </location>
</feature>
<feature type="compositionally biased region" description="Acidic residues" evidence="2">
    <location>
        <begin position="30"/>
        <end position="40"/>
    </location>
</feature>
<feature type="modified residue" description="Leucine amide" evidence="3 4">
    <location>
        <position position="70"/>
    </location>
</feature>
<feature type="non-terminal residue" evidence="8">
    <location>
        <position position="70"/>
    </location>
</feature>
<evidence type="ECO:0000255" key="1"/>
<evidence type="ECO:0000256" key="2">
    <source>
        <dbReference type="SAM" id="MobiDB-lite"/>
    </source>
</evidence>
<evidence type="ECO:0000269" key="3">
    <source>
    </source>
</evidence>
<evidence type="ECO:0000269" key="4">
    <source>
    </source>
</evidence>
<evidence type="ECO:0000303" key="5">
    <source>
    </source>
</evidence>
<evidence type="ECO:0000303" key="6">
    <source>
    </source>
</evidence>
<evidence type="ECO:0000303" key="7">
    <source>
    </source>
</evidence>
<evidence type="ECO:0000305" key="8">
    <source>
    </source>
</evidence>
<name>DRS3_PITHY</name>
<proteinExistence type="evidence at protein level"/>
<comment type="function">
    <text evidence="3 4">Has antibacterial activity against the Gram-negative bacteria E.coli and P.aeruginosa, and the Gram-positive bacteria S.aureus and M.luteus. Has antiprotozoal activity against L.amazonensis. No hemolytic activity.</text>
</comment>
<comment type="subcellular location">
    <subcellularLocation>
        <location evidence="3 4">Secreted</location>
    </subcellularLocation>
</comment>
<comment type="tissue specificity">
    <text evidence="3 4">Expressed by the skin glands.</text>
</comment>
<comment type="mass spectrometry" mass="2409.41" error="0.1" method="MALDI" evidence="3"/>
<comment type="mass spectrometry" mass="2408.4" error="0.5" method="Electrospray" evidence="4"/>
<comment type="similarity">
    <text evidence="1">Belongs to the frog skin active peptide (FSAP) family. Dermaseptin subfamily.</text>
</comment>
<comment type="online information" name="The antimicrobial peptide database">
    <link uri="https://wangapd3.com/database/query_output.php?ID=0763"/>
</comment>